<dbReference type="EMBL" id="AE017143">
    <property type="protein sequence ID" value="AAP95483.1"/>
    <property type="molecule type" value="Genomic_DNA"/>
</dbReference>
<dbReference type="RefSeq" id="WP_010944536.1">
    <property type="nucleotide sequence ID" value="NC_002940.2"/>
</dbReference>
<dbReference type="SMR" id="Q7VNI7"/>
<dbReference type="STRING" id="233412.HD_0544"/>
<dbReference type="KEGG" id="hdu:HD_0544"/>
<dbReference type="eggNOG" id="COG3066">
    <property type="taxonomic scope" value="Bacteria"/>
</dbReference>
<dbReference type="HOGENOM" id="CLU_086669_0_0_6"/>
<dbReference type="OrthoDB" id="5634909at2"/>
<dbReference type="Proteomes" id="UP000001022">
    <property type="component" value="Chromosome"/>
</dbReference>
<dbReference type="GO" id="GO:0005737">
    <property type="term" value="C:cytoplasm"/>
    <property type="evidence" value="ECO:0007669"/>
    <property type="project" value="UniProtKB-SubCell"/>
</dbReference>
<dbReference type="GO" id="GO:0003677">
    <property type="term" value="F:DNA binding"/>
    <property type="evidence" value="ECO:0007669"/>
    <property type="project" value="InterPro"/>
</dbReference>
<dbReference type="GO" id="GO:0004519">
    <property type="term" value="F:endonuclease activity"/>
    <property type="evidence" value="ECO:0007669"/>
    <property type="project" value="UniProtKB-UniRule"/>
</dbReference>
<dbReference type="GO" id="GO:0006304">
    <property type="term" value="P:DNA modification"/>
    <property type="evidence" value="ECO:0007669"/>
    <property type="project" value="InterPro"/>
</dbReference>
<dbReference type="GO" id="GO:0006298">
    <property type="term" value="P:mismatch repair"/>
    <property type="evidence" value="ECO:0007669"/>
    <property type="project" value="UniProtKB-UniRule"/>
</dbReference>
<dbReference type="CDD" id="cd00583">
    <property type="entry name" value="MutH-like"/>
    <property type="match status" value="1"/>
</dbReference>
<dbReference type="Gene3D" id="3.40.600.10">
    <property type="entry name" value="DNA mismatch repair MutH/Restriction endonuclease, type II"/>
    <property type="match status" value="1"/>
</dbReference>
<dbReference type="HAMAP" id="MF_00759">
    <property type="entry name" value="MutH"/>
    <property type="match status" value="1"/>
</dbReference>
<dbReference type="InterPro" id="IPR004230">
    <property type="entry name" value="DNA_mismatch_repair_MutH"/>
</dbReference>
<dbReference type="InterPro" id="IPR011337">
    <property type="entry name" value="DNA_rep_MutH/RE_typeII_Sau3AI"/>
</dbReference>
<dbReference type="InterPro" id="IPR037057">
    <property type="entry name" value="DNA_rep_MutH/T2_RE_sf"/>
</dbReference>
<dbReference type="InterPro" id="IPR011335">
    <property type="entry name" value="Restrct_endonuc-II-like"/>
</dbReference>
<dbReference type="NCBIfam" id="TIGR02248">
    <property type="entry name" value="mutH_TIGR"/>
    <property type="match status" value="1"/>
</dbReference>
<dbReference type="NCBIfam" id="NF003458">
    <property type="entry name" value="PRK05070.1"/>
    <property type="match status" value="1"/>
</dbReference>
<dbReference type="Pfam" id="PF02976">
    <property type="entry name" value="MutH"/>
    <property type="match status" value="1"/>
</dbReference>
<dbReference type="SMART" id="SM00927">
    <property type="entry name" value="MutH"/>
    <property type="match status" value="1"/>
</dbReference>
<dbReference type="SUPFAM" id="SSF52980">
    <property type="entry name" value="Restriction endonuclease-like"/>
    <property type="match status" value="1"/>
</dbReference>
<accession>Q7VNI7</accession>
<comment type="function">
    <text evidence="1">Sequence-specific endonuclease that cleaves unmethylated GATC sequences. It is involved in DNA mismatch repair.</text>
</comment>
<comment type="subcellular location">
    <subcellularLocation>
        <location evidence="1">Cytoplasm</location>
    </subcellularLocation>
</comment>
<comment type="similarity">
    <text evidence="1">Belongs to the MutH family.</text>
</comment>
<feature type="chain" id="PRO_0000198668" description="DNA mismatch repair protein MutH">
    <location>
        <begin position="1"/>
        <end position="226"/>
    </location>
</feature>
<reference key="1">
    <citation type="submission" date="2003-06" db="EMBL/GenBank/DDBJ databases">
        <title>The complete genome sequence of Haemophilus ducreyi.</title>
        <authorList>
            <person name="Munson R.S. Jr."/>
            <person name="Ray W.C."/>
            <person name="Mahairas G."/>
            <person name="Sabo P."/>
            <person name="Mungur R."/>
            <person name="Johnson L."/>
            <person name="Nguyen D."/>
            <person name="Wang J."/>
            <person name="Forst C."/>
            <person name="Hood L."/>
        </authorList>
    </citation>
    <scope>NUCLEOTIDE SEQUENCE [LARGE SCALE GENOMIC DNA]</scope>
    <source>
        <strain>35000HP / ATCC 700724</strain>
    </source>
</reference>
<gene>
    <name evidence="1" type="primary">mutH</name>
    <name type="ordered locus">HD_0544</name>
</gene>
<keyword id="KW-0963">Cytoplasm</keyword>
<keyword id="KW-0227">DNA damage</keyword>
<keyword id="KW-0234">DNA repair</keyword>
<keyword id="KW-0255">Endonuclease</keyword>
<keyword id="KW-0378">Hydrolase</keyword>
<keyword id="KW-0540">Nuclease</keyword>
<keyword id="KW-1185">Reference proteome</keyword>
<protein>
    <recommendedName>
        <fullName evidence="1">DNA mismatch repair protein MutH</fullName>
    </recommendedName>
    <alternativeName>
        <fullName evidence="1">Methyl-directed mismatch repair protein</fullName>
    </alternativeName>
</protein>
<sequence length="226" mass="25732">MQLSIQPQSEAELLAKANWLAGFTLGELAQQLNTVVPPDLTRDKGWVGQIIERALGATAGSKPEQDFAHLGIELKTIPINNHGLPLETTFICLAPLIHNQGITWQTSHVKYKLQRVLWIPIQAERSIPIKDRYIGRAILWSPSYQQEQQLRNDWEELMEYIVLGRLDQINGHLGEVMQLRPKGRNRLSITQSIDQHGEQIQSLPLAFYLRKPFTAAILQNFLQQSD</sequence>
<name>MUTH_HAEDU</name>
<proteinExistence type="inferred from homology"/>
<evidence type="ECO:0000255" key="1">
    <source>
        <dbReference type="HAMAP-Rule" id="MF_00759"/>
    </source>
</evidence>
<organism>
    <name type="scientific">Haemophilus ducreyi (strain 35000HP / ATCC 700724)</name>
    <dbReference type="NCBI Taxonomy" id="233412"/>
    <lineage>
        <taxon>Bacteria</taxon>
        <taxon>Pseudomonadati</taxon>
        <taxon>Pseudomonadota</taxon>
        <taxon>Gammaproteobacteria</taxon>
        <taxon>Pasteurellales</taxon>
        <taxon>Pasteurellaceae</taxon>
        <taxon>Haemophilus</taxon>
    </lineage>
</organism>